<name>DAPF_METJA</name>
<sequence>MEFTKMHALGNDYIVINEFDGEKVKEEEKAEFSRKICRRGFSVGADGVIFIQKPTSDEYDVRFRIFNSDGSEAEMCGNGIRCFSKYVYERIMKKNPLKVETKGGLRVSEMEIEGDEVKKIKVYMGVPKFKLKDIPMVVDGYKEDDEFLNGELKLKNPYLPKVKLSVVNVGNPHAVIFVEDNNIDLDFVREHLDVIGKEIEHHEAFPERINVHFVKVLNPNEIRIVTWERGAGYTTACGTGTTASVIMAHKLGKTNNRVLAHLDGGDLEIEIKDDGVYMIGDAVMVYDAKLINIGW</sequence>
<keyword id="KW-0028">Amino-acid biosynthesis</keyword>
<keyword id="KW-0963">Cytoplasm</keyword>
<keyword id="KW-0413">Isomerase</keyword>
<keyword id="KW-0457">Lysine biosynthesis</keyword>
<keyword id="KW-1185">Reference proteome</keyword>
<feature type="chain" id="PRO_0000149886" description="Diaminopimelate epimerase">
    <location>
        <begin position="1"/>
        <end position="295"/>
    </location>
</feature>
<feature type="active site" description="Proton donor" evidence="1">
    <location>
        <position position="76"/>
    </location>
</feature>
<feature type="active site" description="Proton acceptor" evidence="1">
    <location>
        <position position="237"/>
    </location>
</feature>
<feature type="binding site" evidence="1">
    <location>
        <position position="11"/>
    </location>
    <ligand>
        <name>substrate</name>
    </ligand>
</feature>
<feature type="binding site" evidence="1">
    <location>
        <position position="67"/>
    </location>
    <ligand>
        <name>substrate</name>
    </ligand>
</feature>
<feature type="binding site" evidence="1">
    <location>
        <begin position="77"/>
        <end position="78"/>
    </location>
    <ligand>
        <name>substrate</name>
    </ligand>
</feature>
<feature type="binding site" evidence="1">
    <location>
        <position position="171"/>
    </location>
    <ligand>
        <name>substrate</name>
    </ligand>
</feature>
<feature type="binding site" evidence="1">
    <location>
        <position position="210"/>
    </location>
    <ligand>
        <name>substrate</name>
    </ligand>
</feature>
<feature type="binding site" evidence="1">
    <location>
        <begin position="228"/>
        <end position="229"/>
    </location>
    <ligand>
        <name>substrate</name>
    </ligand>
</feature>
<feature type="binding site" evidence="1">
    <location>
        <begin position="238"/>
        <end position="239"/>
    </location>
    <ligand>
        <name>substrate</name>
    </ligand>
</feature>
<feature type="site" description="Could be important to modulate the pK values of the two catalytic cysteine residues" evidence="1">
    <location>
        <position position="173"/>
    </location>
</feature>
<feature type="site" description="Could be important to modulate the pK values of the two catalytic cysteine residues" evidence="1">
    <location>
        <position position="228"/>
    </location>
</feature>
<dbReference type="EC" id="5.1.1.7" evidence="1"/>
<dbReference type="EMBL" id="L77117">
    <property type="protein sequence ID" value="AAB99120.1"/>
    <property type="molecule type" value="Genomic_DNA"/>
</dbReference>
<dbReference type="PIR" id="F64439">
    <property type="entry name" value="F64439"/>
</dbReference>
<dbReference type="RefSeq" id="WP_010870630.1">
    <property type="nucleotide sequence ID" value="NC_000909.1"/>
</dbReference>
<dbReference type="SMR" id="Q58519"/>
<dbReference type="FunCoup" id="Q58519">
    <property type="interactions" value="184"/>
</dbReference>
<dbReference type="STRING" id="243232.MJ_1119"/>
<dbReference type="PaxDb" id="243232-MJ_1119"/>
<dbReference type="EnsemblBacteria" id="AAB99120">
    <property type="protein sequence ID" value="AAB99120"/>
    <property type="gene ID" value="MJ_1119"/>
</dbReference>
<dbReference type="GeneID" id="1452015"/>
<dbReference type="KEGG" id="mja:MJ_1119"/>
<dbReference type="eggNOG" id="arCOG02255">
    <property type="taxonomic scope" value="Archaea"/>
</dbReference>
<dbReference type="HOGENOM" id="CLU_053306_3_0_2"/>
<dbReference type="InParanoid" id="Q58519"/>
<dbReference type="OrthoDB" id="358699at2157"/>
<dbReference type="PhylomeDB" id="Q58519"/>
<dbReference type="UniPathway" id="UPA00034">
    <property type="reaction ID" value="UER00025"/>
</dbReference>
<dbReference type="Proteomes" id="UP000000805">
    <property type="component" value="Chromosome"/>
</dbReference>
<dbReference type="GO" id="GO:0005829">
    <property type="term" value="C:cytosol"/>
    <property type="evidence" value="ECO:0000318"/>
    <property type="project" value="GO_Central"/>
</dbReference>
<dbReference type="GO" id="GO:0008837">
    <property type="term" value="F:diaminopimelate epimerase activity"/>
    <property type="evidence" value="ECO:0000318"/>
    <property type="project" value="GO_Central"/>
</dbReference>
<dbReference type="GO" id="GO:0009089">
    <property type="term" value="P:lysine biosynthetic process via diaminopimelate"/>
    <property type="evidence" value="ECO:0000318"/>
    <property type="project" value="GO_Central"/>
</dbReference>
<dbReference type="FunFam" id="3.10.310.10:FF:000001">
    <property type="entry name" value="Diaminopimelate epimerase"/>
    <property type="match status" value="1"/>
</dbReference>
<dbReference type="Gene3D" id="3.10.310.10">
    <property type="entry name" value="Diaminopimelate Epimerase, Chain A, domain 1"/>
    <property type="match status" value="2"/>
</dbReference>
<dbReference type="HAMAP" id="MF_00197">
    <property type="entry name" value="DAP_epimerase"/>
    <property type="match status" value="1"/>
</dbReference>
<dbReference type="InterPro" id="IPR018510">
    <property type="entry name" value="DAP_epimerase_AS"/>
</dbReference>
<dbReference type="InterPro" id="IPR001653">
    <property type="entry name" value="DAP_epimerase_DapF"/>
</dbReference>
<dbReference type="NCBIfam" id="TIGR00652">
    <property type="entry name" value="DapF"/>
    <property type="match status" value="1"/>
</dbReference>
<dbReference type="PANTHER" id="PTHR31689:SF0">
    <property type="entry name" value="DIAMINOPIMELATE EPIMERASE"/>
    <property type="match status" value="1"/>
</dbReference>
<dbReference type="PANTHER" id="PTHR31689">
    <property type="entry name" value="DIAMINOPIMELATE EPIMERASE, CHLOROPLASTIC"/>
    <property type="match status" value="1"/>
</dbReference>
<dbReference type="Pfam" id="PF01678">
    <property type="entry name" value="DAP_epimerase"/>
    <property type="match status" value="2"/>
</dbReference>
<dbReference type="SUPFAM" id="SSF54506">
    <property type="entry name" value="Diaminopimelate epimerase-like"/>
    <property type="match status" value="2"/>
</dbReference>
<dbReference type="PROSITE" id="PS01326">
    <property type="entry name" value="DAP_EPIMERASE"/>
    <property type="match status" value="1"/>
</dbReference>
<evidence type="ECO:0000255" key="1">
    <source>
        <dbReference type="HAMAP-Rule" id="MF_00197"/>
    </source>
</evidence>
<comment type="function">
    <text evidence="1">Catalyzes the stereoinversion of LL-2,6-diaminopimelate (L,L-DAP) to meso-diaminopimelate (meso-DAP), a precursor of L-lysine.</text>
</comment>
<comment type="catalytic activity">
    <reaction evidence="1">
        <text>(2S,6S)-2,6-diaminopimelate = meso-2,6-diaminopimelate</text>
        <dbReference type="Rhea" id="RHEA:15393"/>
        <dbReference type="ChEBI" id="CHEBI:57609"/>
        <dbReference type="ChEBI" id="CHEBI:57791"/>
        <dbReference type="EC" id="5.1.1.7"/>
    </reaction>
</comment>
<comment type="pathway">
    <text evidence="1">Amino-acid biosynthesis; L-lysine biosynthesis via DAP pathway; DL-2,6-diaminopimelate from LL-2,6-diaminopimelate: step 1/1.</text>
</comment>
<comment type="subunit">
    <text evidence="1">Homodimer.</text>
</comment>
<comment type="subcellular location">
    <subcellularLocation>
        <location evidence="1">Cytoplasm</location>
    </subcellularLocation>
</comment>
<comment type="similarity">
    <text evidence="1">Belongs to the diaminopimelate epimerase family.</text>
</comment>
<accession>Q58519</accession>
<proteinExistence type="inferred from homology"/>
<organism>
    <name type="scientific">Methanocaldococcus jannaschii (strain ATCC 43067 / DSM 2661 / JAL-1 / JCM 10045 / NBRC 100440)</name>
    <name type="common">Methanococcus jannaschii</name>
    <dbReference type="NCBI Taxonomy" id="243232"/>
    <lineage>
        <taxon>Archaea</taxon>
        <taxon>Methanobacteriati</taxon>
        <taxon>Methanobacteriota</taxon>
        <taxon>Methanomada group</taxon>
        <taxon>Methanococci</taxon>
        <taxon>Methanococcales</taxon>
        <taxon>Methanocaldococcaceae</taxon>
        <taxon>Methanocaldococcus</taxon>
    </lineage>
</organism>
<gene>
    <name evidence="1" type="primary">dapF</name>
    <name type="ordered locus">MJ1119</name>
</gene>
<protein>
    <recommendedName>
        <fullName evidence="1">Diaminopimelate epimerase</fullName>
        <shortName evidence="1">DAP epimerase</shortName>
        <ecNumber evidence="1">5.1.1.7</ecNumber>
    </recommendedName>
    <alternativeName>
        <fullName evidence="1">PLP-independent amino acid racemase</fullName>
    </alternativeName>
</protein>
<reference key="1">
    <citation type="journal article" date="1996" name="Science">
        <title>Complete genome sequence of the methanogenic archaeon, Methanococcus jannaschii.</title>
        <authorList>
            <person name="Bult C.J."/>
            <person name="White O."/>
            <person name="Olsen G.J."/>
            <person name="Zhou L."/>
            <person name="Fleischmann R.D."/>
            <person name="Sutton G.G."/>
            <person name="Blake J.A."/>
            <person name="FitzGerald L.M."/>
            <person name="Clayton R.A."/>
            <person name="Gocayne J.D."/>
            <person name="Kerlavage A.R."/>
            <person name="Dougherty B.A."/>
            <person name="Tomb J.-F."/>
            <person name="Adams M.D."/>
            <person name="Reich C.I."/>
            <person name="Overbeek R."/>
            <person name="Kirkness E.F."/>
            <person name="Weinstock K.G."/>
            <person name="Merrick J.M."/>
            <person name="Glodek A."/>
            <person name="Scott J.L."/>
            <person name="Geoghagen N.S.M."/>
            <person name="Weidman J.F."/>
            <person name="Fuhrmann J.L."/>
            <person name="Nguyen D."/>
            <person name="Utterback T.R."/>
            <person name="Kelley J.M."/>
            <person name="Peterson J.D."/>
            <person name="Sadow P.W."/>
            <person name="Hanna M.C."/>
            <person name="Cotton M.D."/>
            <person name="Roberts K.M."/>
            <person name="Hurst M.A."/>
            <person name="Kaine B.P."/>
            <person name="Borodovsky M."/>
            <person name="Klenk H.-P."/>
            <person name="Fraser C.M."/>
            <person name="Smith H.O."/>
            <person name="Woese C.R."/>
            <person name="Venter J.C."/>
        </authorList>
    </citation>
    <scope>NUCLEOTIDE SEQUENCE [LARGE SCALE GENOMIC DNA]</scope>
    <source>
        <strain>ATCC 43067 / DSM 2661 / JAL-1 / JCM 10045 / NBRC 100440</strain>
    </source>
</reference>